<comment type="function">
    <text>PPIases accelerate the folding of proteins. It catalyzes the cis-trans isomerization of proline imidic peptide bonds in oligopeptides.</text>
</comment>
<comment type="catalytic activity">
    <reaction>
        <text>[protein]-peptidylproline (omega=180) = [protein]-peptidylproline (omega=0)</text>
        <dbReference type="Rhea" id="RHEA:16237"/>
        <dbReference type="Rhea" id="RHEA-COMP:10747"/>
        <dbReference type="Rhea" id="RHEA-COMP:10748"/>
        <dbReference type="ChEBI" id="CHEBI:83833"/>
        <dbReference type="ChEBI" id="CHEBI:83834"/>
        <dbReference type="EC" id="5.2.1.8"/>
    </reaction>
</comment>
<comment type="activity regulation">
    <text evidence="1">Binds cyclosporin A (CsA). CsA mediates some of its effects via an inhibitory action on PPIase (By similarity).</text>
</comment>
<comment type="subunit">
    <text evidence="6">Interacts with A.tumefaciens VirD2.</text>
</comment>
<comment type="subcellular location">
    <subcellularLocation>
        <location evidence="7">Cytoplasm</location>
    </subcellularLocation>
</comment>
<comment type="tissue specificity">
    <text evidence="3 4 5">Ubiquitous, with higher levels in roots and flowers. Confined to vascular tissues. Also detected in stigmas, base of siliques and anthers.</text>
</comment>
<comment type="induction">
    <text evidence="5">Down-regulated by salt and cytokinin treatment.</text>
</comment>
<comment type="similarity">
    <text evidence="7">Belongs to the cyclophilin-type PPIase family.</text>
</comment>
<keyword id="KW-0143">Chaperone</keyword>
<keyword id="KW-0963">Cytoplasm</keyword>
<keyword id="KW-0413">Isomerase</keyword>
<keyword id="KW-1185">Reference proteome</keyword>
<keyword id="KW-0697">Rotamase</keyword>
<accession>Q42406</accession>
<accession>Q0WRR9</accession>
<proteinExistence type="evidence at protein level"/>
<organism>
    <name type="scientific">Arabidopsis thaliana</name>
    <name type="common">Mouse-ear cress</name>
    <dbReference type="NCBI Taxonomy" id="3702"/>
    <lineage>
        <taxon>Eukaryota</taxon>
        <taxon>Viridiplantae</taxon>
        <taxon>Streptophyta</taxon>
        <taxon>Embryophyta</taxon>
        <taxon>Tracheophyta</taxon>
        <taxon>Spermatophyta</taxon>
        <taxon>Magnoliopsida</taxon>
        <taxon>eudicotyledons</taxon>
        <taxon>Gunneridae</taxon>
        <taxon>Pentapetalae</taxon>
        <taxon>rosids</taxon>
        <taxon>malvids</taxon>
        <taxon>Brassicales</taxon>
        <taxon>Brassicaceae</taxon>
        <taxon>Camelineae</taxon>
        <taxon>Arabidopsis</taxon>
    </lineage>
</organism>
<evidence type="ECO:0000250" key="1"/>
<evidence type="ECO:0000255" key="2">
    <source>
        <dbReference type="PROSITE-ProRule" id="PRU00156"/>
    </source>
</evidence>
<evidence type="ECO:0000269" key="3">
    <source>
    </source>
</evidence>
<evidence type="ECO:0000269" key="4">
    <source>
    </source>
</evidence>
<evidence type="ECO:0000269" key="5">
    <source>
    </source>
</evidence>
<evidence type="ECO:0000269" key="6">
    <source>
    </source>
</evidence>
<evidence type="ECO:0000305" key="7"/>
<feature type="chain" id="PRO_0000064134" description="Peptidyl-prolyl cis-trans isomerase CYP18-4">
    <location>
        <begin position="1"/>
        <end position="172"/>
    </location>
</feature>
<feature type="domain" description="PPIase cyclophilin-type" evidence="2">
    <location>
        <begin position="7"/>
        <end position="170"/>
    </location>
</feature>
<sequence>MSNPRVFFDMSLSGTPIGRIEMELFADTTPNTAENFRALCTGEKGMGKLGKPLHFKGSIFHRVIPGFMCQGGDFTAKNGTGGESIYGAKFKDENFIKKHTGAGILSMANSGPNTNGSQFFICTDKTSWLDGKHVVFGQVVKGLDVVKAIEKVGSDSGKTSKVVTITDCGQLS</sequence>
<dbReference type="EC" id="5.2.1.8"/>
<dbReference type="EMBL" id="U07276">
    <property type="protein sequence ID" value="AAA66197.1"/>
    <property type="molecule type" value="mRNA"/>
</dbReference>
<dbReference type="EMBL" id="U32186">
    <property type="protein sequence ID" value="AAA75512.1"/>
    <property type="molecule type" value="Genomic_DNA"/>
</dbReference>
<dbReference type="EMBL" id="AL079347">
    <property type="protein sequence ID" value="CAB45448.1"/>
    <property type="molecule type" value="Genomic_DNA"/>
</dbReference>
<dbReference type="EMBL" id="AL161586">
    <property type="protein sequence ID" value="CAB80204.1"/>
    <property type="molecule type" value="Genomic_DNA"/>
</dbReference>
<dbReference type="EMBL" id="CP002687">
    <property type="protein sequence ID" value="AEE86431.1"/>
    <property type="molecule type" value="Genomic_DNA"/>
</dbReference>
<dbReference type="EMBL" id="AY054468">
    <property type="protein sequence ID" value="AAK96660.1"/>
    <property type="molecule type" value="mRNA"/>
</dbReference>
<dbReference type="EMBL" id="BT006560">
    <property type="protein sequence ID" value="AAP21368.1"/>
    <property type="molecule type" value="mRNA"/>
</dbReference>
<dbReference type="EMBL" id="AK228231">
    <property type="protein sequence ID" value="BAF00180.1"/>
    <property type="molecule type" value="mRNA"/>
</dbReference>
<dbReference type="EMBL" id="AY087606">
    <property type="protein sequence ID" value="AAM65147.1"/>
    <property type="molecule type" value="mRNA"/>
</dbReference>
<dbReference type="PIR" id="S50141">
    <property type="entry name" value="S50141"/>
</dbReference>
<dbReference type="RefSeq" id="NP_195213.1">
    <property type="nucleotide sequence ID" value="NM_119653.4"/>
</dbReference>
<dbReference type="SMR" id="Q42406"/>
<dbReference type="BioGRID" id="14921">
    <property type="interactions" value="7"/>
</dbReference>
<dbReference type="FunCoup" id="Q42406">
    <property type="interactions" value="1854"/>
</dbReference>
<dbReference type="IntAct" id="Q42406">
    <property type="interactions" value="1"/>
</dbReference>
<dbReference type="STRING" id="3702.Q42406"/>
<dbReference type="MetOSite" id="Q42406"/>
<dbReference type="PaxDb" id="3702-AT4G34870.1"/>
<dbReference type="ProteomicsDB" id="240859"/>
<dbReference type="EnsemblPlants" id="AT4G34870.1">
    <property type="protein sequence ID" value="AT4G34870.1"/>
    <property type="gene ID" value="AT4G34870"/>
</dbReference>
<dbReference type="GeneID" id="829639"/>
<dbReference type="Gramene" id="AT4G34870.1">
    <property type="protein sequence ID" value="AT4G34870.1"/>
    <property type="gene ID" value="AT4G34870"/>
</dbReference>
<dbReference type="KEGG" id="ath:AT4G34870"/>
<dbReference type="Araport" id="AT4G34870"/>
<dbReference type="TAIR" id="AT4G34870">
    <property type="gene designation" value="ROC5"/>
</dbReference>
<dbReference type="eggNOG" id="KOG0865">
    <property type="taxonomic scope" value="Eukaryota"/>
</dbReference>
<dbReference type="HOGENOM" id="CLU_012062_4_2_1"/>
<dbReference type="InParanoid" id="Q42406"/>
<dbReference type="OMA" id="RICFELY"/>
<dbReference type="OrthoDB" id="193499at2759"/>
<dbReference type="PhylomeDB" id="Q42406"/>
<dbReference type="CD-CODE" id="4299E36E">
    <property type="entry name" value="Nucleolus"/>
</dbReference>
<dbReference type="PRO" id="PR:Q42406"/>
<dbReference type="Proteomes" id="UP000006548">
    <property type="component" value="Chromosome 4"/>
</dbReference>
<dbReference type="ExpressionAtlas" id="Q42406">
    <property type="expression patterns" value="baseline and differential"/>
</dbReference>
<dbReference type="GO" id="GO:0048046">
    <property type="term" value="C:apoplast"/>
    <property type="evidence" value="ECO:0007005"/>
    <property type="project" value="TAIR"/>
</dbReference>
<dbReference type="GO" id="GO:0009507">
    <property type="term" value="C:chloroplast"/>
    <property type="evidence" value="ECO:0007005"/>
    <property type="project" value="TAIR"/>
</dbReference>
<dbReference type="GO" id="GO:0005829">
    <property type="term" value="C:cytosol"/>
    <property type="evidence" value="ECO:0007005"/>
    <property type="project" value="TAIR"/>
</dbReference>
<dbReference type="GO" id="GO:0005794">
    <property type="term" value="C:Golgi apparatus"/>
    <property type="evidence" value="ECO:0007005"/>
    <property type="project" value="TAIR"/>
</dbReference>
<dbReference type="GO" id="GO:0000325">
    <property type="term" value="C:plant-type vacuole"/>
    <property type="evidence" value="ECO:0007005"/>
    <property type="project" value="TAIR"/>
</dbReference>
<dbReference type="GO" id="GO:0005886">
    <property type="term" value="C:plasma membrane"/>
    <property type="evidence" value="ECO:0007005"/>
    <property type="project" value="TAIR"/>
</dbReference>
<dbReference type="GO" id="GO:0003755">
    <property type="term" value="F:peptidyl-prolyl cis-trans isomerase activity"/>
    <property type="evidence" value="ECO:0000250"/>
    <property type="project" value="TAIR"/>
</dbReference>
<dbReference type="GO" id="GO:0006457">
    <property type="term" value="P:protein folding"/>
    <property type="evidence" value="ECO:0007669"/>
    <property type="project" value="InterPro"/>
</dbReference>
<dbReference type="GO" id="GO:0007165">
    <property type="term" value="P:signal transduction"/>
    <property type="evidence" value="ECO:0000250"/>
    <property type="project" value="TAIR"/>
</dbReference>
<dbReference type="CDD" id="cd01926">
    <property type="entry name" value="cyclophilin_ABH_like"/>
    <property type="match status" value="1"/>
</dbReference>
<dbReference type="FunFam" id="2.40.100.10:FF:000002">
    <property type="entry name" value="Peptidyl-prolyl cis-trans isomerase"/>
    <property type="match status" value="1"/>
</dbReference>
<dbReference type="Gene3D" id="2.40.100.10">
    <property type="entry name" value="Cyclophilin-like"/>
    <property type="match status" value="1"/>
</dbReference>
<dbReference type="InterPro" id="IPR029000">
    <property type="entry name" value="Cyclophilin-like_dom_sf"/>
</dbReference>
<dbReference type="InterPro" id="IPR024936">
    <property type="entry name" value="Cyclophilin-type_PPIase"/>
</dbReference>
<dbReference type="InterPro" id="IPR020892">
    <property type="entry name" value="Cyclophilin-type_PPIase_CS"/>
</dbReference>
<dbReference type="InterPro" id="IPR002130">
    <property type="entry name" value="Cyclophilin-type_PPIase_dom"/>
</dbReference>
<dbReference type="PANTHER" id="PTHR11071">
    <property type="entry name" value="PEPTIDYL-PROLYL CIS-TRANS ISOMERASE"/>
    <property type="match status" value="1"/>
</dbReference>
<dbReference type="PANTHER" id="PTHR11071:SF533">
    <property type="entry name" value="PEPTIDYL-PROLYL CIS-TRANS ISOMERASE CYP18-4"/>
    <property type="match status" value="1"/>
</dbReference>
<dbReference type="Pfam" id="PF00160">
    <property type="entry name" value="Pro_isomerase"/>
    <property type="match status" value="1"/>
</dbReference>
<dbReference type="PIRSF" id="PIRSF001467">
    <property type="entry name" value="Peptidylpro_ismrse"/>
    <property type="match status" value="1"/>
</dbReference>
<dbReference type="PRINTS" id="PR00153">
    <property type="entry name" value="CSAPPISMRASE"/>
</dbReference>
<dbReference type="SUPFAM" id="SSF50891">
    <property type="entry name" value="Cyclophilin-like"/>
    <property type="match status" value="1"/>
</dbReference>
<dbReference type="PROSITE" id="PS00170">
    <property type="entry name" value="CSA_PPIASE_1"/>
    <property type="match status" value="1"/>
</dbReference>
<dbReference type="PROSITE" id="PS50072">
    <property type="entry name" value="CSA_PPIASE_2"/>
    <property type="match status" value="1"/>
</dbReference>
<protein>
    <recommendedName>
        <fullName>Peptidyl-prolyl cis-trans isomerase CYP18-4</fullName>
        <shortName>PPIase CYP18-4</shortName>
        <ecNumber>5.2.1.8</ecNumber>
    </recommendedName>
    <alternativeName>
        <fullName>Cyclophilin of 18 kDa 4</fullName>
        <shortName>Cyclophilin-1</shortName>
    </alternativeName>
    <alternativeName>
        <fullName>Rotamase cyclophilin-5</fullName>
    </alternativeName>
</protein>
<name>CP18D_ARATH</name>
<gene>
    <name type="primary">CYP18-4</name>
    <name type="synonym">43H1</name>
    <name type="synonym">CYP1</name>
    <name type="synonym">CYPA</name>
    <name type="synonym">ROC5</name>
    <name type="ordered locus">At4g34870</name>
    <name type="ORF">T11I11.110</name>
</gene>
<reference key="1">
    <citation type="journal article" date="1994" name="Biochim. Biophys. Acta">
        <title>The nucleotide and deduced amino acid sequences of a peptidyl-prolyl cis-trans isomerase from Arabidopsis thaliana.</title>
        <authorList>
            <person name="Hayman G.T."/>
            <person name="Miernyk J.A."/>
        </authorList>
    </citation>
    <scope>NUCLEOTIDE SEQUENCE [MRNA]</scope>
    <source>
        <strain>cv. Columbia</strain>
    </source>
</reference>
<reference key="2">
    <citation type="journal article" date="1995" name="Plant Cell Physiol.">
        <title>Cloning and sequence analysis of genes for cyclophilin from Arabidopsis thaliana.</title>
        <authorList>
            <person name="Saito T."/>
            <person name="Ishiguro S."/>
            <person name="Ashida H."/>
            <person name="Kawamukai M."/>
            <person name="Matsuda H."/>
            <person name="Ochiai H."/>
            <person name="Nakagawa T."/>
        </authorList>
    </citation>
    <scope>NUCLEOTIDE SEQUENCE [GENOMIC DNA]</scope>
    <source>
        <strain>cv. Landsberg erecta</strain>
    </source>
</reference>
<reference key="3">
    <citation type="journal article" date="1999" name="Nature">
        <title>Sequence and analysis of chromosome 4 of the plant Arabidopsis thaliana.</title>
        <authorList>
            <person name="Mayer K.F.X."/>
            <person name="Schueller C."/>
            <person name="Wambutt R."/>
            <person name="Murphy G."/>
            <person name="Volckaert G."/>
            <person name="Pohl T."/>
            <person name="Duesterhoeft A."/>
            <person name="Stiekema W."/>
            <person name="Entian K.-D."/>
            <person name="Terryn N."/>
            <person name="Harris B."/>
            <person name="Ansorge W."/>
            <person name="Brandt P."/>
            <person name="Grivell L.A."/>
            <person name="Rieger M."/>
            <person name="Weichselgartner M."/>
            <person name="de Simone V."/>
            <person name="Obermaier B."/>
            <person name="Mache R."/>
            <person name="Mueller M."/>
            <person name="Kreis M."/>
            <person name="Delseny M."/>
            <person name="Puigdomenech P."/>
            <person name="Watson M."/>
            <person name="Schmidtheini T."/>
            <person name="Reichert B."/>
            <person name="Portetelle D."/>
            <person name="Perez-Alonso M."/>
            <person name="Boutry M."/>
            <person name="Bancroft I."/>
            <person name="Vos P."/>
            <person name="Hoheisel J."/>
            <person name="Zimmermann W."/>
            <person name="Wedler H."/>
            <person name="Ridley P."/>
            <person name="Langham S.-A."/>
            <person name="McCullagh B."/>
            <person name="Bilham L."/>
            <person name="Robben J."/>
            <person name="van der Schueren J."/>
            <person name="Grymonprez B."/>
            <person name="Chuang Y.-J."/>
            <person name="Vandenbussche F."/>
            <person name="Braeken M."/>
            <person name="Weltjens I."/>
            <person name="Voet M."/>
            <person name="Bastiaens I."/>
            <person name="Aert R."/>
            <person name="Defoor E."/>
            <person name="Weitzenegger T."/>
            <person name="Bothe G."/>
            <person name="Ramsperger U."/>
            <person name="Hilbert H."/>
            <person name="Braun M."/>
            <person name="Holzer E."/>
            <person name="Brandt A."/>
            <person name="Peters S."/>
            <person name="van Staveren M."/>
            <person name="Dirkse W."/>
            <person name="Mooijman P."/>
            <person name="Klein Lankhorst R."/>
            <person name="Rose M."/>
            <person name="Hauf J."/>
            <person name="Koetter P."/>
            <person name="Berneiser S."/>
            <person name="Hempel S."/>
            <person name="Feldpausch M."/>
            <person name="Lamberth S."/>
            <person name="Van den Daele H."/>
            <person name="De Keyser A."/>
            <person name="Buysshaert C."/>
            <person name="Gielen J."/>
            <person name="Villarroel R."/>
            <person name="De Clercq R."/>
            <person name="van Montagu M."/>
            <person name="Rogers J."/>
            <person name="Cronin A."/>
            <person name="Quail M.A."/>
            <person name="Bray-Allen S."/>
            <person name="Clark L."/>
            <person name="Doggett J."/>
            <person name="Hall S."/>
            <person name="Kay M."/>
            <person name="Lennard N."/>
            <person name="McLay K."/>
            <person name="Mayes R."/>
            <person name="Pettett A."/>
            <person name="Rajandream M.A."/>
            <person name="Lyne M."/>
            <person name="Benes V."/>
            <person name="Rechmann S."/>
            <person name="Borkova D."/>
            <person name="Bloecker H."/>
            <person name="Scharfe M."/>
            <person name="Grimm M."/>
            <person name="Loehnert T.-H."/>
            <person name="Dose S."/>
            <person name="de Haan M."/>
            <person name="Maarse A.C."/>
            <person name="Schaefer M."/>
            <person name="Mueller-Auer S."/>
            <person name="Gabel C."/>
            <person name="Fuchs M."/>
            <person name="Fartmann B."/>
            <person name="Granderath K."/>
            <person name="Dauner D."/>
            <person name="Herzl A."/>
            <person name="Neumann S."/>
            <person name="Argiriou A."/>
            <person name="Vitale D."/>
            <person name="Liguori R."/>
            <person name="Piravandi E."/>
            <person name="Massenet O."/>
            <person name="Quigley F."/>
            <person name="Clabauld G."/>
            <person name="Muendlein A."/>
            <person name="Felber R."/>
            <person name="Schnabl S."/>
            <person name="Hiller R."/>
            <person name="Schmidt W."/>
            <person name="Lecharny A."/>
            <person name="Aubourg S."/>
            <person name="Chefdor F."/>
            <person name="Cooke R."/>
            <person name="Berger C."/>
            <person name="Monfort A."/>
            <person name="Casacuberta E."/>
            <person name="Gibbons T."/>
            <person name="Weber N."/>
            <person name="Vandenbol M."/>
            <person name="Bargues M."/>
            <person name="Terol J."/>
            <person name="Torres A."/>
            <person name="Perez-Perez A."/>
            <person name="Purnelle B."/>
            <person name="Bent E."/>
            <person name="Johnson S."/>
            <person name="Tacon D."/>
            <person name="Jesse T."/>
            <person name="Heijnen L."/>
            <person name="Schwarz S."/>
            <person name="Scholler P."/>
            <person name="Heber S."/>
            <person name="Francs P."/>
            <person name="Bielke C."/>
            <person name="Frishman D."/>
            <person name="Haase D."/>
            <person name="Lemcke K."/>
            <person name="Mewes H.-W."/>
            <person name="Stocker S."/>
            <person name="Zaccaria P."/>
            <person name="Bevan M."/>
            <person name="Wilson R.K."/>
            <person name="de la Bastide M."/>
            <person name="Habermann K."/>
            <person name="Parnell L."/>
            <person name="Dedhia N."/>
            <person name="Gnoj L."/>
            <person name="Schutz K."/>
            <person name="Huang E."/>
            <person name="Spiegel L."/>
            <person name="Sekhon M."/>
            <person name="Murray J."/>
            <person name="Sheet P."/>
            <person name="Cordes M."/>
            <person name="Abu-Threideh J."/>
            <person name="Stoneking T."/>
            <person name="Kalicki J."/>
            <person name="Graves T."/>
            <person name="Harmon G."/>
            <person name="Edwards J."/>
            <person name="Latreille P."/>
            <person name="Courtney L."/>
            <person name="Cloud J."/>
            <person name="Abbott A."/>
            <person name="Scott K."/>
            <person name="Johnson D."/>
            <person name="Minx P."/>
            <person name="Bentley D."/>
            <person name="Fulton B."/>
            <person name="Miller N."/>
            <person name="Greco T."/>
            <person name="Kemp K."/>
            <person name="Kramer J."/>
            <person name="Fulton L."/>
            <person name="Mardis E."/>
            <person name="Dante M."/>
            <person name="Pepin K."/>
            <person name="Hillier L.W."/>
            <person name="Nelson J."/>
            <person name="Spieth J."/>
            <person name="Ryan E."/>
            <person name="Andrews S."/>
            <person name="Geisel C."/>
            <person name="Layman D."/>
            <person name="Du H."/>
            <person name="Ali J."/>
            <person name="Berghoff A."/>
            <person name="Jones K."/>
            <person name="Drone K."/>
            <person name="Cotton M."/>
            <person name="Joshu C."/>
            <person name="Antonoiu B."/>
            <person name="Zidanic M."/>
            <person name="Strong C."/>
            <person name="Sun H."/>
            <person name="Lamar B."/>
            <person name="Yordan C."/>
            <person name="Ma P."/>
            <person name="Zhong J."/>
            <person name="Preston R."/>
            <person name="Vil D."/>
            <person name="Shekher M."/>
            <person name="Matero A."/>
            <person name="Shah R."/>
            <person name="Swaby I.K."/>
            <person name="O'Shaughnessy A."/>
            <person name="Rodriguez M."/>
            <person name="Hoffman J."/>
            <person name="Till S."/>
            <person name="Granat S."/>
            <person name="Shohdy N."/>
            <person name="Hasegawa A."/>
            <person name="Hameed A."/>
            <person name="Lodhi M."/>
            <person name="Johnson A."/>
            <person name="Chen E."/>
            <person name="Marra M.A."/>
            <person name="Martienssen R."/>
            <person name="McCombie W.R."/>
        </authorList>
    </citation>
    <scope>NUCLEOTIDE SEQUENCE [LARGE SCALE GENOMIC DNA]</scope>
    <source>
        <strain>cv. Columbia</strain>
    </source>
</reference>
<reference key="4">
    <citation type="journal article" date="2017" name="Plant J.">
        <title>Araport11: a complete reannotation of the Arabidopsis thaliana reference genome.</title>
        <authorList>
            <person name="Cheng C.Y."/>
            <person name="Krishnakumar V."/>
            <person name="Chan A.P."/>
            <person name="Thibaud-Nissen F."/>
            <person name="Schobel S."/>
            <person name="Town C.D."/>
        </authorList>
    </citation>
    <scope>GENOME REANNOTATION</scope>
    <source>
        <strain>cv. Columbia</strain>
    </source>
</reference>
<reference key="5">
    <citation type="journal article" date="2003" name="Science">
        <title>Empirical analysis of transcriptional activity in the Arabidopsis genome.</title>
        <authorList>
            <person name="Yamada K."/>
            <person name="Lim J."/>
            <person name="Dale J.M."/>
            <person name="Chen H."/>
            <person name="Shinn P."/>
            <person name="Palm C.J."/>
            <person name="Southwick A.M."/>
            <person name="Wu H.C."/>
            <person name="Kim C.J."/>
            <person name="Nguyen M."/>
            <person name="Pham P.K."/>
            <person name="Cheuk R.F."/>
            <person name="Karlin-Newmann G."/>
            <person name="Liu S.X."/>
            <person name="Lam B."/>
            <person name="Sakano H."/>
            <person name="Wu T."/>
            <person name="Yu G."/>
            <person name="Miranda M."/>
            <person name="Quach H.L."/>
            <person name="Tripp M."/>
            <person name="Chang C.H."/>
            <person name="Lee J.M."/>
            <person name="Toriumi M.J."/>
            <person name="Chan M.M."/>
            <person name="Tang C.C."/>
            <person name="Onodera C.S."/>
            <person name="Deng J.M."/>
            <person name="Akiyama K."/>
            <person name="Ansari Y."/>
            <person name="Arakawa T."/>
            <person name="Banh J."/>
            <person name="Banno F."/>
            <person name="Bowser L."/>
            <person name="Brooks S.Y."/>
            <person name="Carninci P."/>
            <person name="Chao Q."/>
            <person name="Choy N."/>
            <person name="Enju A."/>
            <person name="Goldsmith A.D."/>
            <person name="Gurjal M."/>
            <person name="Hansen N.F."/>
            <person name="Hayashizaki Y."/>
            <person name="Johnson-Hopson C."/>
            <person name="Hsuan V.W."/>
            <person name="Iida K."/>
            <person name="Karnes M."/>
            <person name="Khan S."/>
            <person name="Koesema E."/>
            <person name="Ishida J."/>
            <person name="Jiang P.X."/>
            <person name="Jones T."/>
            <person name="Kawai J."/>
            <person name="Kamiya A."/>
            <person name="Meyers C."/>
            <person name="Nakajima M."/>
            <person name="Narusaka M."/>
            <person name="Seki M."/>
            <person name="Sakurai T."/>
            <person name="Satou M."/>
            <person name="Tamse R."/>
            <person name="Vaysberg M."/>
            <person name="Wallender E.K."/>
            <person name="Wong C."/>
            <person name="Yamamura Y."/>
            <person name="Yuan S."/>
            <person name="Shinozaki K."/>
            <person name="Davis R.W."/>
            <person name="Theologis A."/>
            <person name="Ecker J.R."/>
        </authorList>
    </citation>
    <scope>NUCLEOTIDE SEQUENCE [LARGE SCALE MRNA]</scope>
    <source>
        <strain>cv. Columbia</strain>
    </source>
</reference>
<reference key="6">
    <citation type="submission" date="2006-07" db="EMBL/GenBank/DDBJ databases">
        <title>Large-scale analysis of RIKEN Arabidopsis full-length (RAFL) cDNAs.</title>
        <authorList>
            <person name="Totoki Y."/>
            <person name="Seki M."/>
            <person name="Ishida J."/>
            <person name="Nakajima M."/>
            <person name="Enju A."/>
            <person name="Kamiya A."/>
            <person name="Narusaka M."/>
            <person name="Shin-i T."/>
            <person name="Nakagawa M."/>
            <person name="Sakamoto N."/>
            <person name="Oishi K."/>
            <person name="Kohara Y."/>
            <person name="Kobayashi M."/>
            <person name="Toyoda A."/>
            <person name="Sakaki Y."/>
            <person name="Sakurai T."/>
            <person name="Iida K."/>
            <person name="Akiyama K."/>
            <person name="Satou M."/>
            <person name="Toyoda T."/>
            <person name="Konagaya A."/>
            <person name="Carninci P."/>
            <person name="Kawai J."/>
            <person name="Hayashizaki Y."/>
            <person name="Shinozaki K."/>
        </authorList>
    </citation>
    <scope>NUCLEOTIDE SEQUENCE [LARGE SCALE MRNA]</scope>
    <source>
        <strain>cv. Columbia</strain>
    </source>
</reference>
<reference key="7">
    <citation type="submission" date="2002-03" db="EMBL/GenBank/DDBJ databases">
        <title>Full-length cDNA from Arabidopsis thaliana.</title>
        <authorList>
            <person name="Brover V.V."/>
            <person name="Troukhan M.E."/>
            <person name="Alexandrov N.A."/>
            <person name="Lu Y.-P."/>
            <person name="Flavell R.B."/>
            <person name="Feldmann K.A."/>
        </authorList>
    </citation>
    <scope>NUCLEOTIDE SEQUENCE [LARGE SCALE MRNA]</scope>
</reference>
<reference key="8">
    <citation type="journal article" date="1997" name="Plant Mol. Biol.">
        <title>Characterization of the cyclophilin gene family of Arabidopsis thaliana and phylogenetic analysis of known cyclophilin proteins.</title>
        <authorList>
            <person name="Chou I.T."/>
            <person name="Gasser C.S."/>
        </authorList>
    </citation>
    <scope>TISSUE SPECIFICITY</scope>
    <scope>GENE FAMILY</scope>
    <scope>NOMENCLATURE</scope>
    <scope>INDUCTION</scope>
    <source>
        <strain>cv. Columbia</strain>
        <tissue>Leaf</tissue>
    </source>
</reference>
<reference key="9">
    <citation type="journal article" date="1998" name="Proc. Natl. Acad. Sci. U.S.A.">
        <title>Agrobacterium VirD2 protein interacts with plant host cyclophilins.</title>
        <authorList>
            <person name="Deng W."/>
            <person name="Chen L."/>
            <person name="Wood D.W."/>
            <person name="Metcalfe T."/>
            <person name="Liang X."/>
            <person name="Gordon M.P."/>
            <person name="Comai L."/>
            <person name="Nester E.W."/>
        </authorList>
    </citation>
    <scope>INTERACTION WITH AGROBACTERIUM VIRD2</scope>
</reference>
<reference key="10">
    <citation type="journal article" date="1999" name="Biosci. Biotechnol. Biochem.">
        <title>Two cytosolic cyclophilin genes of Arabidopsis thaliana differently regulated in temporal- and organ-specific expression.</title>
        <authorList>
            <person name="Saito T."/>
            <person name="Tadakuma K."/>
            <person name="Takahashi N."/>
            <person name="Ashida H."/>
            <person name="Tanaka K."/>
            <person name="Kawamukai M."/>
            <person name="Matsuda H."/>
            <person name="Nakagawa T."/>
        </authorList>
    </citation>
    <scope>TISSUE SPECIFICITY</scope>
</reference>
<reference key="11">
    <citation type="journal article" date="2004" name="Plant Physiol.">
        <title>Immunophilins and parvulins. Superfamily of peptidyl prolyl isomerases in Arabidopsis.</title>
        <authorList>
            <person name="He Z."/>
            <person name="Li L."/>
            <person name="Luan S."/>
        </authorList>
    </citation>
    <scope>TISSUE SPECIFICITY</scope>
</reference>
<reference key="12">
    <citation type="journal article" date="2004" name="Plant Physiol.">
        <title>The Arabidopsis cyclophilin gene family.</title>
        <authorList>
            <person name="Romano P.G.N."/>
            <person name="Horton P."/>
            <person name="Gray J.E."/>
        </authorList>
    </citation>
    <scope>GENE FAMILY</scope>
    <scope>NOMENCLATURE</scope>
</reference>